<reference key="1">
    <citation type="submission" date="2006-12" db="EMBL/GenBank/DDBJ databases">
        <authorList>
            <person name="Fouts D.E."/>
            <person name="Nelson K.E."/>
            <person name="Sebastian Y."/>
        </authorList>
    </citation>
    <scope>NUCLEOTIDE SEQUENCE [LARGE SCALE GENOMIC DNA]</scope>
    <source>
        <strain>81-176</strain>
    </source>
</reference>
<protein>
    <recommendedName>
        <fullName evidence="1">5-oxoprolinase subunit A</fullName>
        <shortName evidence="1">5-OPase subunit A</shortName>
        <ecNumber evidence="1">3.5.2.9</ecNumber>
    </recommendedName>
    <alternativeName>
        <fullName evidence="1">5-oxoprolinase (ATP-hydrolyzing) subunit A</fullName>
    </alternativeName>
</protein>
<comment type="function">
    <text evidence="1">Catalyzes the cleavage of 5-oxoproline to form L-glutamate coupled to the hydrolysis of ATP to ADP and inorganic phosphate.</text>
</comment>
<comment type="catalytic activity">
    <reaction evidence="1">
        <text>5-oxo-L-proline + ATP + 2 H2O = L-glutamate + ADP + phosphate + H(+)</text>
        <dbReference type="Rhea" id="RHEA:10348"/>
        <dbReference type="ChEBI" id="CHEBI:15377"/>
        <dbReference type="ChEBI" id="CHEBI:15378"/>
        <dbReference type="ChEBI" id="CHEBI:29985"/>
        <dbReference type="ChEBI" id="CHEBI:30616"/>
        <dbReference type="ChEBI" id="CHEBI:43474"/>
        <dbReference type="ChEBI" id="CHEBI:58402"/>
        <dbReference type="ChEBI" id="CHEBI:456216"/>
        <dbReference type="EC" id="3.5.2.9"/>
    </reaction>
</comment>
<comment type="subunit">
    <text evidence="1">Forms a complex composed of PxpA, PxpB and PxpC.</text>
</comment>
<comment type="similarity">
    <text evidence="1">Belongs to the LamB/PxpA family.</text>
</comment>
<name>PXPA_CAMJJ</name>
<dbReference type="EC" id="3.5.2.9" evidence="1"/>
<dbReference type="EMBL" id="CP000538">
    <property type="protein sequence ID" value="EAQ72786.1"/>
    <property type="molecule type" value="Genomic_DNA"/>
</dbReference>
<dbReference type="RefSeq" id="WP_002851457.1">
    <property type="nucleotide sequence ID" value="NC_008787.1"/>
</dbReference>
<dbReference type="SMR" id="A1W1E0"/>
<dbReference type="KEGG" id="cjj:CJJ81176_1526"/>
<dbReference type="eggNOG" id="COG1540">
    <property type="taxonomic scope" value="Bacteria"/>
</dbReference>
<dbReference type="HOGENOM" id="CLU_069535_0_0_7"/>
<dbReference type="Proteomes" id="UP000000646">
    <property type="component" value="Chromosome"/>
</dbReference>
<dbReference type="GO" id="GO:0017168">
    <property type="term" value="F:5-oxoprolinase (ATP-hydrolyzing) activity"/>
    <property type="evidence" value="ECO:0007669"/>
    <property type="project" value="UniProtKB-UniRule"/>
</dbReference>
<dbReference type="GO" id="GO:0005524">
    <property type="term" value="F:ATP binding"/>
    <property type="evidence" value="ECO:0007669"/>
    <property type="project" value="UniProtKB-UniRule"/>
</dbReference>
<dbReference type="GO" id="GO:0005975">
    <property type="term" value="P:carbohydrate metabolic process"/>
    <property type="evidence" value="ECO:0007669"/>
    <property type="project" value="InterPro"/>
</dbReference>
<dbReference type="CDD" id="cd10787">
    <property type="entry name" value="LamB_YcsF_like"/>
    <property type="match status" value="1"/>
</dbReference>
<dbReference type="Gene3D" id="3.20.20.370">
    <property type="entry name" value="Glycoside hydrolase/deacetylase"/>
    <property type="match status" value="1"/>
</dbReference>
<dbReference type="HAMAP" id="MF_00691">
    <property type="entry name" value="PxpA"/>
    <property type="match status" value="1"/>
</dbReference>
<dbReference type="InterPro" id="IPR011330">
    <property type="entry name" value="Glyco_hydro/deAcase_b/a-brl"/>
</dbReference>
<dbReference type="InterPro" id="IPR005501">
    <property type="entry name" value="LamB/YcsF/PxpA-like"/>
</dbReference>
<dbReference type="NCBIfam" id="NF003814">
    <property type="entry name" value="PRK05406.1-3"/>
    <property type="match status" value="1"/>
</dbReference>
<dbReference type="NCBIfam" id="NF003816">
    <property type="entry name" value="PRK05406.1-5"/>
    <property type="match status" value="1"/>
</dbReference>
<dbReference type="PANTHER" id="PTHR30292:SF0">
    <property type="entry name" value="5-OXOPROLINASE SUBUNIT A"/>
    <property type="match status" value="1"/>
</dbReference>
<dbReference type="PANTHER" id="PTHR30292">
    <property type="entry name" value="UNCHARACTERIZED PROTEIN YBGL-RELATED"/>
    <property type="match status" value="1"/>
</dbReference>
<dbReference type="Pfam" id="PF03746">
    <property type="entry name" value="LamB_YcsF"/>
    <property type="match status" value="1"/>
</dbReference>
<dbReference type="SUPFAM" id="SSF88713">
    <property type="entry name" value="Glycoside hydrolase/deacetylase"/>
    <property type="match status" value="1"/>
</dbReference>
<evidence type="ECO:0000255" key="1">
    <source>
        <dbReference type="HAMAP-Rule" id="MF_00691"/>
    </source>
</evidence>
<sequence length="255" mass="28084">MFKVDLNSDLGESFGAYKMGMDEEILKFVSSVNVACGFHAGDPCVMDETLNLAKQNGVCIGAHPSYPDLLGFGRRNMQISFEEAKNYALYQLGALFGFAKAKGMKIQHFKAHGALYNMAAIDENLALALCEAVASFDENIIFLGLSNSAMNEAAKKKGLRYANEVFADRAYNDDGTLVSRKLEGALIHDENLAIKRVIKMIKESKVTSINGKEIDLKADSICVHGDNAKALEFVKKIKENLKKEQIQICALENFI</sequence>
<accession>A1W1E0</accession>
<proteinExistence type="inferred from homology"/>
<keyword id="KW-0067">ATP-binding</keyword>
<keyword id="KW-0378">Hydrolase</keyword>
<keyword id="KW-0547">Nucleotide-binding</keyword>
<feature type="chain" id="PRO_1000045197" description="5-oxoprolinase subunit A">
    <location>
        <begin position="1"/>
        <end position="255"/>
    </location>
</feature>
<organism>
    <name type="scientific">Campylobacter jejuni subsp. jejuni serotype O:23/36 (strain 81-176)</name>
    <dbReference type="NCBI Taxonomy" id="354242"/>
    <lineage>
        <taxon>Bacteria</taxon>
        <taxon>Pseudomonadati</taxon>
        <taxon>Campylobacterota</taxon>
        <taxon>Epsilonproteobacteria</taxon>
        <taxon>Campylobacterales</taxon>
        <taxon>Campylobacteraceae</taxon>
        <taxon>Campylobacter</taxon>
    </lineage>
</organism>
<gene>
    <name evidence="1" type="primary">pxpA</name>
    <name type="ordered locus">CJJ81176_1526</name>
</gene>